<accession>Q9LRX6</accession>
<organism>
    <name type="scientific">Arabidopsis thaliana</name>
    <name type="common">Mouse-ear cress</name>
    <dbReference type="NCBI Taxonomy" id="3702"/>
    <lineage>
        <taxon>Eukaryota</taxon>
        <taxon>Viridiplantae</taxon>
        <taxon>Streptophyta</taxon>
        <taxon>Embryophyta</taxon>
        <taxon>Tracheophyta</taxon>
        <taxon>Spermatophyta</taxon>
        <taxon>Magnoliopsida</taxon>
        <taxon>eudicotyledons</taxon>
        <taxon>Gunneridae</taxon>
        <taxon>Pentapetalae</taxon>
        <taxon>rosids</taxon>
        <taxon>malvids</taxon>
        <taxon>Brassicales</taxon>
        <taxon>Brassicaceae</taxon>
        <taxon>Camelineae</taxon>
        <taxon>Arabidopsis</taxon>
    </lineage>
</organism>
<name>Y3485_ARATH</name>
<keyword id="KW-0238">DNA-binding</keyword>
<keyword id="KW-0539">Nucleus</keyword>
<keyword id="KW-1185">Reference proteome</keyword>
<keyword id="KW-0804">Transcription</keyword>
<keyword id="KW-0805">Transcription regulation</keyword>
<proteinExistence type="inferred from homology"/>
<feature type="chain" id="PRO_0000375139" description="Putative B3 domain-containing protein At3g24850">
    <location>
        <begin position="1"/>
        <end position="359"/>
    </location>
</feature>
<feature type="DNA-binding region" description="TF-B3" evidence="1">
    <location>
        <begin position="250"/>
        <end position="351"/>
    </location>
</feature>
<feature type="region of interest" description="Disordered" evidence="2">
    <location>
        <begin position="92"/>
        <end position="111"/>
    </location>
</feature>
<feature type="region of interest" description="Disordered" evidence="2">
    <location>
        <begin position="159"/>
        <end position="192"/>
    </location>
</feature>
<feature type="compositionally biased region" description="Polar residues" evidence="2">
    <location>
        <begin position="100"/>
        <end position="111"/>
    </location>
</feature>
<evidence type="ECO:0000255" key="1">
    <source>
        <dbReference type="PROSITE-ProRule" id="PRU00326"/>
    </source>
</evidence>
<evidence type="ECO:0000256" key="2">
    <source>
        <dbReference type="SAM" id="MobiDB-lite"/>
    </source>
</evidence>
<protein>
    <recommendedName>
        <fullName>Putative B3 domain-containing protein At3g24850</fullName>
    </recommendedName>
</protein>
<comment type="subcellular location">
    <subcellularLocation>
        <location evidence="1">Nucleus</location>
    </subcellularLocation>
</comment>
<sequence length="359" mass="40669">MSSMYHDYDHLTASGKGLWSKFYGLVDAAVLLYDEIQRRGKIVSEEESQKRIFCLFPRRKRSSLVKRQQKLNGGFISFTSSSLIDLNQLPTDSEIEDPQTSDSQMKTLQNSSSEPCTSLVLFDYKTAESEKMEAKTLQNPSSELCSSLVLSDYKMAESEKMETKDPPNPLSLCLTGNTSRKRRAVEERKRTGGFKKAKVAPFPGTARDTPKWLVKVMRDMKEAKDAKLIFEKTLFVTDINPTQNRLSMPFNNLLQNDFLTSVESRIIKEDINNNKKIGVGAILVDQRSVKWGVMLKRWELKKESGKGSWNYNLICGWNDVVEANGLKEGDNISVWSFRCRGVLCFAMEQSSSSLALCLC</sequence>
<gene>
    <name type="ordered locus">At3g24850</name>
    <name type="ORF">K7P8.14</name>
</gene>
<dbReference type="EMBL" id="AB028609">
    <property type="protein sequence ID" value="BAB02895.1"/>
    <property type="molecule type" value="Genomic_DNA"/>
</dbReference>
<dbReference type="EMBL" id="CP002686">
    <property type="protein sequence ID" value="AEE76953.1"/>
    <property type="molecule type" value="Genomic_DNA"/>
</dbReference>
<dbReference type="RefSeq" id="NP_189129.1">
    <property type="nucleotide sequence ID" value="NM_113397.1"/>
</dbReference>
<dbReference type="iPTMnet" id="Q9LRX6"/>
<dbReference type="PaxDb" id="3702-AT3G24850.1"/>
<dbReference type="DNASU" id="822083"/>
<dbReference type="EnsemblPlants" id="AT3G24850.1">
    <property type="protein sequence ID" value="AT3G24850.1"/>
    <property type="gene ID" value="AT3G24850"/>
</dbReference>
<dbReference type="GeneID" id="822083"/>
<dbReference type="Gramene" id="AT3G24850.1">
    <property type="protein sequence ID" value="AT3G24850.1"/>
    <property type="gene ID" value="AT3G24850"/>
</dbReference>
<dbReference type="KEGG" id="ath:AT3G24850"/>
<dbReference type="Araport" id="AT3G24850"/>
<dbReference type="TAIR" id="AT3G24850"/>
<dbReference type="eggNOG" id="ENOG502S4WY">
    <property type="taxonomic scope" value="Eukaryota"/>
</dbReference>
<dbReference type="HOGENOM" id="CLU_072178_0_0_1"/>
<dbReference type="InParanoid" id="Q9LRX6"/>
<dbReference type="OMA" id="SCITENA"/>
<dbReference type="PhylomeDB" id="Q9LRX6"/>
<dbReference type="PRO" id="PR:Q9LRX6"/>
<dbReference type="Proteomes" id="UP000006548">
    <property type="component" value="Chromosome 3"/>
</dbReference>
<dbReference type="ExpressionAtlas" id="Q9LRX6">
    <property type="expression patterns" value="differential"/>
</dbReference>
<dbReference type="GO" id="GO:0005634">
    <property type="term" value="C:nucleus"/>
    <property type="evidence" value="ECO:0007669"/>
    <property type="project" value="UniProtKB-SubCell"/>
</dbReference>
<dbReference type="GO" id="GO:0003677">
    <property type="term" value="F:DNA binding"/>
    <property type="evidence" value="ECO:0007669"/>
    <property type="project" value="UniProtKB-KW"/>
</dbReference>
<dbReference type="CDD" id="cd10017">
    <property type="entry name" value="B3_DNA"/>
    <property type="match status" value="1"/>
</dbReference>
<dbReference type="Gene3D" id="2.40.330.10">
    <property type="entry name" value="DNA-binding pseudobarrel domain"/>
    <property type="match status" value="1"/>
</dbReference>
<dbReference type="InterPro" id="IPR005508">
    <property type="entry name" value="At2g31720-like"/>
</dbReference>
<dbReference type="InterPro" id="IPR003340">
    <property type="entry name" value="B3_DNA-bd"/>
</dbReference>
<dbReference type="InterPro" id="IPR015300">
    <property type="entry name" value="DNA-bd_pseudobarrel_sf"/>
</dbReference>
<dbReference type="PANTHER" id="PTHR31541">
    <property type="entry name" value="B3 DOMAIN PLANT PROTEIN-RELATED"/>
    <property type="match status" value="1"/>
</dbReference>
<dbReference type="PANTHER" id="PTHR31541:SF34">
    <property type="entry name" value="TF-B3 DOMAIN-CONTAINING PROTEIN"/>
    <property type="match status" value="1"/>
</dbReference>
<dbReference type="Pfam" id="PF03754">
    <property type="entry name" value="At2g31720-like"/>
    <property type="match status" value="1"/>
</dbReference>
<dbReference type="SUPFAM" id="SSF101936">
    <property type="entry name" value="DNA-binding pseudobarrel domain"/>
    <property type="match status" value="1"/>
</dbReference>
<dbReference type="PROSITE" id="PS50863">
    <property type="entry name" value="B3"/>
    <property type="match status" value="1"/>
</dbReference>
<reference key="1">
    <citation type="journal article" date="2000" name="DNA Res.">
        <title>Structural analysis of Arabidopsis thaliana chromosome 3. I. Sequence features of the regions of 4,504,864 bp covered by sixty P1 and TAC clones.</title>
        <authorList>
            <person name="Sato S."/>
            <person name="Nakamura Y."/>
            <person name="Kaneko T."/>
            <person name="Katoh T."/>
            <person name="Asamizu E."/>
            <person name="Tabata S."/>
        </authorList>
    </citation>
    <scope>NUCLEOTIDE SEQUENCE [LARGE SCALE GENOMIC DNA]</scope>
    <source>
        <strain>cv. Columbia</strain>
    </source>
</reference>
<reference key="2">
    <citation type="journal article" date="2017" name="Plant J.">
        <title>Araport11: a complete reannotation of the Arabidopsis thaliana reference genome.</title>
        <authorList>
            <person name="Cheng C.Y."/>
            <person name="Krishnakumar V."/>
            <person name="Chan A.P."/>
            <person name="Thibaud-Nissen F."/>
            <person name="Schobel S."/>
            <person name="Town C.D."/>
        </authorList>
    </citation>
    <scope>GENOME REANNOTATION</scope>
    <source>
        <strain>cv. Columbia</strain>
    </source>
</reference>
<reference key="3">
    <citation type="journal article" date="2008" name="Trends Plant Sci.">
        <title>The plant B3 superfamily.</title>
        <authorList>
            <person name="Swaminathan K."/>
            <person name="Peterson K."/>
            <person name="Jack T."/>
        </authorList>
    </citation>
    <scope>GENE FAMILY</scope>
</reference>